<comment type="function">
    <text evidence="3">Sugar phosphate/phosphate translocator that transports inorganic phosphate, triose phosphate, 3-phosphoglycerate, xylulose 5-phosphate (Xul-5-P) and to a lesser extent ribulose 5-phosphate. Does not transport ribose 5-phosphate or hexose phosphates. Provides cytosolic Xul-5-P to the chloroplast, where it is used as an intermediate in the plastidic pentose phosphate pathways.</text>
</comment>
<comment type="subcellular location">
    <subcellularLocation>
        <location evidence="4">Plastid</location>
        <location evidence="4">Chloroplast membrane</location>
        <topology evidence="4">Multi-pass membrane protein</topology>
    </subcellularLocation>
</comment>
<comment type="tissue specificity">
    <text evidence="3">Widely expressed.</text>
</comment>
<comment type="similarity">
    <text evidence="4">Belongs to the TPT transporter family. TPT (TC 2.A.7.9) subfamily.</text>
</comment>
<name>XPT_ARATH</name>
<accession>Q9LF61</accession>
<accession>Q94JT2</accession>
<accession>Q9FR26</accession>
<protein>
    <recommendedName>
        <fullName>Xylulose 5-phosphate/phosphate translocator, chloroplastic</fullName>
        <shortName>Xul-5-P/phosphate translocator</shortName>
    </recommendedName>
</protein>
<feature type="transit peptide" description="Chloroplast" evidence="5">
    <location>
        <begin position="1"/>
        <end position="82"/>
    </location>
</feature>
<feature type="chain" id="PRO_0000406098" description="Xylulose 5-phosphate/phosphate translocator, chloroplastic">
    <location>
        <begin position="83"/>
        <end position="417"/>
    </location>
</feature>
<feature type="transmembrane region" description="Helical" evidence="1">
    <location>
        <begin position="109"/>
        <end position="129"/>
    </location>
</feature>
<feature type="transmembrane region" description="Helical" evidence="1">
    <location>
        <begin position="141"/>
        <end position="161"/>
    </location>
</feature>
<feature type="transmembrane region" description="Helical" evidence="1">
    <location>
        <begin position="173"/>
        <end position="193"/>
    </location>
</feature>
<feature type="transmembrane region" description="Helical" evidence="1">
    <location>
        <begin position="198"/>
        <end position="218"/>
    </location>
</feature>
<feature type="transmembrane region" description="Helical" evidence="1">
    <location>
        <begin position="225"/>
        <end position="245"/>
    </location>
</feature>
<feature type="transmembrane region" description="Helical" evidence="1">
    <location>
        <begin position="247"/>
        <end position="267"/>
    </location>
</feature>
<feature type="transmembrane region" description="Helical" evidence="1">
    <location>
        <begin position="287"/>
        <end position="307"/>
    </location>
</feature>
<feature type="transmembrane region" description="Helical" evidence="1">
    <location>
        <begin position="318"/>
        <end position="338"/>
    </location>
</feature>
<feature type="transmembrane region" description="Helical" evidence="1">
    <location>
        <begin position="384"/>
        <end position="404"/>
    </location>
</feature>
<feature type="domain" description="EamA">
    <location>
        <begin position="127"/>
        <end position="243"/>
    </location>
</feature>
<feature type="region of interest" description="Disordered" evidence="2">
    <location>
        <begin position="66"/>
        <end position="102"/>
    </location>
</feature>
<feature type="compositionally biased region" description="Basic and acidic residues" evidence="2">
    <location>
        <begin position="91"/>
        <end position="102"/>
    </location>
</feature>
<feature type="modified residue" description="N-acetylalanine" evidence="5">
    <location>
        <position position="83"/>
    </location>
</feature>
<feature type="sequence conflict" description="In Ref. 4; AAK50101/AAN18155." evidence="4" ref="4">
    <original>E</original>
    <variation>G</variation>
    <location>
        <position position="101"/>
    </location>
</feature>
<feature type="sequence conflict" description="In Ref. 1; AAG48163." evidence="4" ref="1">
    <original>L</original>
    <variation>W</variation>
    <location>
        <position position="333"/>
    </location>
</feature>
<feature type="sequence conflict" description="In Ref. 1; AAG48163." evidence="4" ref="1">
    <original>F</original>
    <variation>C</variation>
    <location>
        <position position="394"/>
    </location>
</feature>
<keyword id="KW-0007">Acetylation</keyword>
<keyword id="KW-0150">Chloroplast</keyword>
<keyword id="KW-0472">Membrane</keyword>
<keyword id="KW-0934">Plastid</keyword>
<keyword id="KW-1185">Reference proteome</keyword>
<keyword id="KW-0762">Sugar transport</keyword>
<keyword id="KW-0809">Transit peptide</keyword>
<keyword id="KW-0812">Transmembrane</keyword>
<keyword id="KW-1133">Transmembrane helix</keyword>
<keyword id="KW-0813">Transport</keyword>
<dbReference type="EMBL" id="AF209211">
    <property type="protein sequence ID" value="AAG48163.1"/>
    <property type="molecule type" value="Genomic_DNA"/>
</dbReference>
<dbReference type="EMBL" id="AL391151">
    <property type="protein sequence ID" value="CAC01907.1"/>
    <property type="molecule type" value="Genomic_DNA"/>
</dbReference>
<dbReference type="EMBL" id="CP002688">
    <property type="protein sequence ID" value="AED92450.1"/>
    <property type="molecule type" value="Genomic_DNA"/>
</dbReference>
<dbReference type="EMBL" id="AF372964">
    <property type="protein sequence ID" value="AAK50101.1"/>
    <property type="molecule type" value="mRNA"/>
</dbReference>
<dbReference type="EMBL" id="BT000586">
    <property type="protein sequence ID" value="AAN18155.1"/>
    <property type="molecule type" value="mRNA"/>
</dbReference>
<dbReference type="PIR" id="T51467">
    <property type="entry name" value="T51467"/>
</dbReference>
<dbReference type="RefSeq" id="NP_197265.1">
    <property type="nucleotide sequence ID" value="NM_121769.4"/>
</dbReference>
<dbReference type="SMR" id="Q9LF61"/>
<dbReference type="BioGRID" id="16905">
    <property type="interactions" value="9"/>
</dbReference>
<dbReference type="FunCoup" id="Q9LF61">
    <property type="interactions" value="3221"/>
</dbReference>
<dbReference type="IntAct" id="Q9LF61">
    <property type="interactions" value="9"/>
</dbReference>
<dbReference type="STRING" id="3702.Q9LF61"/>
<dbReference type="TCDB" id="2.A.7.9.22">
    <property type="family name" value="the drug/metabolite transporter (dmt) superfamily"/>
</dbReference>
<dbReference type="GlyGen" id="Q9LF61">
    <property type="glycosylation" value="1 site"/>
</dbReference>
<dbReference type="iPTMnet" id="Q9LF61"/>
<dbReference type="PaxDb" id="3702-AT5G17630.1"/>
<dbReference type="ProteomicsDB" id="242459"/>
<dbReference type="EnsemblPlants" id="AT5G17630.1">
    <property type="protein sequence ID" value="AT5G17630.1"/>
    <property type="gene ID" value="AT5G17630"/>
</dbReference>
<dbReference type="GeneID" id="831629"/>
<dbReference type="Gramene" id="AT5G17630.1">
    <property type="protein sequence ID" value="AT5G17630.1"/>
    <property type="gene ID" value="AT5G17630"/>
</dbReference>
<dbReference type="KEGG" id="ath:AT5G17630"/>
<dbReference type="Araport" id="AT5G17630"/>
<dbReference type="TAIR" id="AT5G17630">
    <property type="gene designation" value="XPT"/>
</dbReference>
<dbReference type="eggNOG" id="KOG1441">
    <property type="taxonomic scope" value="Eukaryota"/>
</dbReference>
<dbReference type="HOGENOM" id="CLU_019048_0_1_1"/>
<dbReference type="InParanoid" id="Q9LF61"/>
<dbReference type="OMA" id="SYPLAVW"/>
<dbReference type="OrthoDB" id="6418713at2759"/>
<dbReference type="PhylomeDB" id="Q9LF61"/>
<dbReference type="PRO" id="PR:Q9LF61"/>
<dbReference type="Proteomes" id="UP000006548">
    <property type="component" value="Chromosome 5"/>
</dbReference>
<dbReference type="ExpressionAtlas" id="Q9LF61">
    <property type="expression patterns" value="baseline and differential"/>
</dbReference>
<dbReference type="GO" id="GO:0009941">
    <property type="term" value="C:chloroplast envelope"/>
    <property type="evidence" value="ECO:0007005"/>
    <property type="project" value="TAIR"/>
</dbReference>
<dbReference type="GO" id="GO:0031969">
    <property type="term" value="C:chloroplast membrane"/>
    <property type="evidence" value="ECO:0007669"/>
    <property type="project" value="UniProtKB-SubCell"/>
</dbReference>
<dbReference type="GO" id="GO:0009536">
    <property type="term" value="C:plastid"/>
    <property type="evidence" value="ECO:0007005"/>
    <property type="project" value="TAIR"/>
</dbReference>
<dbReference type="GO" id="GO:0015120">
    <property type="term" value="F:phosphoglycerate transmembrane transporter activity"/>
    <property type="evidence" value="ECO:0000314"/>
    <property type="project" value="UniProtKB"/>
</dbReference>
<dbReference type="GO" id="GO:0071917">
    <property type="term" value="F:triose-phosphate transmembrane transporter activity"/>
    <property type="evidence" value="ECO:0000314"/>
    <property type="project" value="UniProtKB"/>
</dbReference>
<dbReference type="GO" id="GO:0015713">
    <property type="term" value="P:phosphoglycerate transmembrane transport"/>
    <property type="evidence" value="ECO:0000314"/>
    <property type="project" value="UniProtKB"/>
</dbReference>
<dbReference type="GO" id="GO:0035436">
    <property type="term" value="P:triose phosphate transmembrane transport"/>
    <property type="evidence" value="ECO:0000314"/>
    <property type="project" value="UniProtKB"/>
</dbReference>
<dbReference type="InterPro" id="IPR004853">
    <property type="entry name" value="Sugar_P_trans_dom"/>
</dbReference>
<dbReference type="InterPro" id="IPR004696">
    <property type="entry name" value="Tpt_PEP_transl"/>
</dbReference>
<dbReference type="InterPro" id="IPR050186">
    <property type="entry name" value="TPT_transporter"/>
</dbReference>
<dbReference type="NCBIfam" id="TIGR00817">
    <property type="entry name" value="tpt"/>
    <property type="match status" value="1"/>
</dbReference>
<dbReference type="PANTHER" id="PTHR11132">
    <property type="entry name" value="SOLUTE CARRIER FAMILY 35"/>
    <property type="match status" value="1"/>
</dbReference>
<dbReference type="Pfam" id="PF03151">
    <property type="entry name" value="TPT"/>
    <property type="match status" value="1"/>
</dbReference>
<dbReference type="SUPFAM" id="SSF103481">
    <property type="entry name" value="Multidrug resistance efflux transporter EmrE"/>
    <property type="match status" value="1"/>
</dbReference>
<evidence type="ECO:0000255" key="1"/>
<evidence type="ECO:0000256" key="2">
    <source>
        <dbReference type="SAM" id="MobiDB-lite"/>
    </source>
</evidence>
<evidence type="ECO:0000269" key="3">
    <source>
    </source>
</evidence>
<evidence type="ECO:0000305" key="4"/>
<evidence type="ECO:0007744" key="5">
    <source>
    </source>
</evidence>
<organism>
    <name type="scientific">Arabidopsis thaliana</name>
    <name type="common">Mouse-ear cress</name>
    <dbReference type="NCBI Taxonomy" id="3702"/>
    <lineage>
        <taxon>Eukaryota</taxon>
        <taxon>Viridiplantae</taxon>
        <taxon>Streptophyta</taxon>
        <taxon>Embryophyta</taxon>
        <taxon>Tracheophyta</taxon>
        <taxon>Spermatophyta</taxon>
        <taxon>Magnoliopsida</taxon>
        <taxon>eudicotyledons</taxon>
        <taxon>Gunneridae</taxon>
        <taxon>Pentapetalae</taxon>
        <taxon>rosids</taxon>
        <taxon>malvids</taxon>
        <taxon>Brassicales</taxon>
        <taxon>Brassicaceae</taxon>
        <taxon>Camelineae</taxon>
        <taxon>Arabidopsis</taxon>
    </lineage>
</organism>
<sequence length="417" mass="45770">MISLNLSPSLNPGLLHKTRTCQQPTRLSALLVTNPKPFNHRHPLGLSPIPNLQIRDVSAKPLLSLTNPESSSGFSRKPRSIAAVGSSDSNPDEKSDLGEAEKKEKKAKTLQLGIVFGLWYFQNIVFNIFNKKALNVFPYPWLLASFQLFAGSIWMLVLWSFKLYPCPKISKPFIIALLGPALFHTIGHISACVSFSKVAVSFTHVIKSAEPVFSVIFSSLLGDSYPLAVWLSILPIVMGCSLAAVTEVSFNLGGLSGAMISNVGFVLRNIYSKRSLQSFKEIDGLNLYGCISILSLLYLFPVAIFVEGSHWVPGYHKAIASVGTPSTFYFWVLLSGVFYHLYNQSSYQALDEISPLTFSVGNTMKRVVVIISTVLVFRNPVRPLNALGSAIAIFGTFLYSQATAKKKKIEVGGDKKN</sequence>
<proteinExistence type="evidence at protein level"/>
<reference key="1">
    <citation type="journal article" date="2002" name="Plant Physiol.">
        <title>The plastidic pentose phosphate translocator represents a link between the cytosolic and the plastidic pentose phosphate pathways in plants.</title>
        <authorList>
            <person name="Eicks M."/>
            <person name="Maurino V."/>
            <person name="Knappe S."/>
            <person name="Fluegge U.I."/>
            <person name="Fischer K."/>
        </authorList>
    </citation>
    <scope>NUCLEOTIDE SEQUENCE [GENOMIC DNA]</scope>
    <scope>FUNCTION</scope>
    <scope>TISSUE SPECIFICITY</scope>
</reference>
<reference key="2">
    <citation type="journal article" date="2000" name="Nature">
        <title>Sequence and analysis of chromosome 5 of the plant Arabidopsis thaliana.</title>
        <authorList>
            <person name="Tabata S."/>
            <person name="Kaneko T."/>
            <person name="Nakamura Y."/>
            <person name="Kotani H."/>
            <person name="Kato T."/>
            <person name="Asamizu E."/>
            <person name="Miyajima N."/>
            <person name="Sasamoto S."/>
            <person name="Kimura T."/>
            <person name="Hosouchi T."/>
            <person name="Kawashima K."/>
            <person name="Kohara M."/>
            <person name="Matsumoto M."/>
            <person name="Matsuno A."/>
            <person name="Muraki A."/>
            <person name="Nakayama S."/>
            <person name="Nakazaki N."/>
            <person name="Naruo K."/>
            <person name="Okumura S."/>
            <person name="Shinpo S."/>
            <person name="Takeuchi C."/>
            <person name="Wada T."/>
            <person name="Watanabe A."/>
            <person name="Yamada M."/>
            <person name="Yasuda M."/>
            <person name="Sato S."/>
            <person name="de la Bastide M."/>
            <person name="Huang E."/>
            <person name="Spiegel L."/>
            <person name="Gnoj L."/>
            <person name="O'Shaughnessy A."/>
            <person name="Preston R."/>
            <person name="Habermann K."/>
            <person name="Murray J."/>
            <person name="Johnson D."/>
            <person name="Rohlfing T."/>
            <person name="Nelson J."/>
            <person name="Stoneking T."/>
            <person name="Pepin K."/>
            <person name="Spieth J."/>
            <person name="Sekhon M."/>
            <person name="Armstrong J."/>
            <person name="Becker M."/>
            <person name="Belter E."/>
            <person name="Cordum H."/>
            <person name="Cordes M."/>
            <person name="Courtney L."/>
            <person name="Courtney W."/>
            <person name="Dante M."/>
            <person name="Du H."/>
            <person name="Edwards J."/>
            <person name="Fryman J."/>
            <person name="Haakensen B."/>
            <person name="Lamar E."/>
            <person name="Latreille P."/>
            <person name="Leonard S."/>
            <person name="Meyer R."/>
            <person name="Mulvaney E."/>
            <person name="Ozersky P."/>
            <person name="Riley A."/>
            <person name="Strowmatt C."/>
            <person name="Wagner-McPherson C."/>
            <person name="Wollam A."/>
            <person name="Yoakum M."/>
            <person name="Bell M."/>
            <person name="Dedhia N."/>
            <person name="Parnell L."/>
            <person name="Shah R."/>
            <person name="Rodriguez M."/>
            <person name="Hoon See L."/>
            <person name="Vil D."/>
            <person name="Baker J."/>
            <person name="Kirchoff K."/>
            <person name="Toth K."/>
            <person name="King L."/>
            <person name="Bahret A."/>
            <person name="Miller B."/>
            <person name="Marra M.A."/>
            <person name="Martienssen R."/>
            <person name="McCombie W.R."/>
            <person name="Wilson R.K."/>
            <person name="Murphy G."/>
            <person name="Bancroft I."/>
            <person name="Volckaert G."/>
            <person name="Wambutt R."/>
            <person name="Duesterhoeft A."/>
            <person name="Stiekema W."/>
            <person name="Pohl T."/>
            <person name="Entian K.-D."/>
            <person name="Terryn N."/>
            <person name="Hartley N."/>
            <person name="Bent E."/>
            <person name="Johnson S."/>
            <person name="Langham S.-A."/>
            <person name="McCullagh B."/>
            <person name="Robben J."/>
            <person name="Grymonprez B."/>
            <person name="Zimmermann W."/>
            <person name="Ramsperger U."/>
            <person name="Wedler H."/>
            <person name="Balke K."/>
            <person name="Wedler E."/>
            <person name="Peters S."/>
            <person name="van Staveren M."/>
            <person name="Dirkse W."/>
            <person name="Mooijman P."/>
            <person name="Klein Lankhorst R."/>
            <person name="Weitzenegger T."/>
            <person name="Bothe G."/>
            <person name="Rose M."/>
            <person name="Hauf J."/>
            <person name="Berneiser S."/>
            <person name="Hempel S."/>
            <person name="Feldpausch M."/>
            <person name="Lamberth S."/>
            <person name="Villarroel R."/>
            <person name="Gielen J."/>
            <person name="Ardiles W."/>
            <person name="Bents O."/>
            <person name="Lemcke K."/>
            <person name="Kolesov G."/>
            <person name="Mayer K.F.X."/>
            <person name="Rudd S."/>
            <person name="Schoof H."/>
            <person name="Schueller C."/>
            <person name="Zaccaria P."/>
            <person name="Mewes H.-W."/>
            <person name="Bevan M."/>
            <person name="Fransz P.F."/>
        </authorList>
    </citation>
    <scope>NUCLEOTIDE SEQUENCE [LARGE SCALE GENOMIC DNA]</scope>
    <source>
        <strain>cv. Columbia</strain>
    </source>
</reference>
<reference key="3">
    <citation type="journal article" date="2017" name="Plant J.">
        <title>Araport11: a complete reannotation of the Arabidopsis thaliana reference genome.</title>
        <authorList>
            <person name="Cheng C.Y."/>
            <person name="Krishnakumar V."/>
            <person name="Chan A.P."/>
            <person name="Thibaud-Nissen F."/>
            <person name="Schobel S."/>
            <person name="Town C.D."/>
        </authorList>
    </citation>
    <scope>GENOME REANNOTATION</scope>
    <source>
        <strain>cv. Columbia</strain>
    </source>
</reference>
<reference key="4">
    <citation type="journal article" date="2003" name="Science">
        <title>Empirical analysis of transcriptional activity in the Arabidopsis genome.</title>
        <authorList>
            <person name="Yamada K."/>
            <person name="Lim J."/>
            <person name="Dale J.M."/>
            <person name="Chen H."/>
            <person name="Shinn P."/>
            <person name="Palm C.J."/>
            <person name="Southwick A.M."/>
            <person name="Wu H.C."/>
            <person name="Kim C.J."/>
            <person name="Nguyen M."/>
            <person name="Pham P.K."/>
            <person name="Cheuk R.F."/>
            <person name="Karlin-Newmann G."/>
            <person name="Liu S.X."/>
            <person name="Lam B."/>
            <person name="Sakano H."/>
            <person name="Wu T."/>
            <person name="Yu G."/>
            <person name="Miranda M."/>
            <person name="Quach H.L."/>
            <person name="Tripp M."/>
            <person name="Chang C.H."/>
            <person name="Lee J.M."/>
            <person name="Toriumi M.J."/>
            <person name="Chan M.M."/>
            <person name="Tang C.C."/>
            <person name="Onodera C.S."/>
            <person name="Deng J.M."/>
            <person name="Akiyama K."/>
            <person name="Ansari Y."/>
            <person name="Arakawa T."/>
            <person name="Banh J."/>
            <person name="Banno F."/>
            <person name="Bowser L."/>
            <person name="Brooks S.Y."/>
            <person name="Carninci P."/>
            <person name="Chao Q."/>
            <person name="Choy N."/>
            <person name="Enju A."/>
            <person name="Goldsmith A.D."/>
            <person name="Gurjal M."/>
            <person name="Hansen N.F."/>
            <person name="Hayashizaki Y."/>
            <person name="Johnson-Hopson C."/>
            <person name="Hsuan V.W."/>
            <person name="Iida K."/>
            <person name="Karnes M."/>
            <person name="Khan S."/>
            <person name="Koesema E."/>
            <person name="Ishida J."/>
            <person name="Jiang P.X."/>
            <person name="Jones T."/>
            <person name="Kawai J."/>
            <person name="Kamiya A."/>
            <person name="Meyers C."/>
            <person name="Nakajima M."/>
            <person name="Narusaka M."/>
            <person name="Seki M."/>
            <person name="Sakurai T."/>
            <person name="Satou M."/>
            <person name="Tamse R."/>
            <person name="Vaysberg M."/>
            <person name="Wallender E.K."/>
            <person name="Wong C."/>
            <person name="Yamamura Y."/>
            <person name="Yuan S."/>
            <person name="Shinozaki K."/>
            <person name="Davis R.W."/>
            <person name="Theologis A."/>
            <person name="Ecker J.R."/>
        </authorList>
    </citation>
    <scope>NUCLEOTIDE SEQUENCE [LARGE SCALE MRNA]</scope>
    <source>
        <strain>cv. Columbia</strain>
    </source>
</reference>
<reference key="5">
    <citation type="journal article" date="2012" name="Mol. Cell. Proteomics">
        <title>Comparative large-scale characterisation of plant vs. mammal proteins reveals similar and idiosyncratic N-alpha acetylation features.</title>
        <authorList>
            <person name="Bienvenut W.V."/>
            <person name="Sumpton D."/>
            <person name="Martinez A."/>
            <person name="Lilla S."/>
            <person name="Espagne C."/>
            <person name="Meinnel T."/>
            <person name="Giglione C."/>
        </authorList>
    </citation>
    <scope>ACETYLATION [LARGE SCALE ANALYSIS] AT ALA-83</scope>
    <scope>CLEAVAGE OF TRANSIT PEPTIDE [LARGE SCALE ANALYSIS] AFTER ALA-82</scope>
    <scope>IDENTIFICATION BY MASS SPECTROMETRY [LARGE SCALE ANALYSIS]</scope>
</reference>
<reference key="6">
    <citation type="journal article" date="2014" name="Proc. Natl. Acad. Sci. U.S.A.">
        <title>The Golgi localized bifunctional UDP-rhamnose/UDP-galactose transporter family of Arabidopsis.</title>
        <authorList>
            <person name="Rautengarten C."/>
            <person name="Ebert B."/>
            <person name="Moreno I."/>
            <person name="Temple H."/>
            <person name="Herter T."/>
            <person name="Link B."/>
            <person name="Donas-Cofre D."/>
            <person name="Moreno A."/>
            <person name="Saez-Aguayo S."/>
            <person name="Blanco F."/>
            <person name="Mortimer J.C."/>
            <person name="Schultink A."/>
            <person name="Reiter W.D."/>
            <person name="Dupree P."/>
            <person name="Pauly M."/>
            <person name="Heazlewood J.L."/>
            <person name="Scheller H.V."/>
            <person name="Orellana A."/>
        </authorList>
    </citation>
    <scope>GENE FAMILY</scope>
</reference>
<gene>
    <name type="primary">XPT</name>
    <name type="synonym">RPT</name>
    <name type="ordered locus">At5g17630</name>
    <name type="ORF">K10A8.110</name>
</gene>